<feature type="chain" id="PRO_0000221995" description="Nucleoprotein">
    <location>
        <begin position="1"/>
        <end position="245"/>
    </location>
</feature>
<feature type="region of interest" description="Essential for oligomerization" evidence="4">
    <location>
        <begin position="1"/>
        <end position="71"/>
    </location>
</feature>
<feature type="binding site" evidence="3">
    <location>
        <position position="30"/>
    </location>
    <ligand>
        <name>RNA</name>
        <dbReference type="ChEBI" id="CHEBI:33697"/>
    </ligand>
</feature>
<feature type="binding site" evidence="3">
    <location>
        <position position="33"/>
    </location>
    <ligand>
        <name>RNA</name>
        <dbReference type="ChEBI" id="CHEBI:33697"/>
    </ligand>
</feature>
<feature type="binding site" evidence="3">
    <location>
        <position position="67"/>
    </location>
    <ligand>
        <name>RNA</name>
        <dbReference type="ChEBI" id="CHEBI:33697"/>
    </ligand>
</feature>
<feature type="binding site" evidence="3">
    <location>
        <position position="105"/>
    </location>
    <ligand>
        <name>RNA</name>
        <dbReference type="ChEBI" id="CHEBI:33697"/>
    </ligand>
</feature>
<feature type="binding site" evidence="3">
    <location>
        <position position="106"/>
    </location>
    <ligand>
        <name>RNA</name>
        <dbReference type="ChEBI" id="CHEBI:33697"/>
    </ligand>
</feature>
<feature type="binding site" evidence="3">
    <location>
        <position position="185"/>
    </location>
    <ligand>
        <name>RNA</name>
        <dbReference type="ChEBI" id="CHEBI:33697"/>
    </ligand>
</feature>
<feature type="binding site" evidence="3">
    <location>
        <position position="195"/>
    </location>
    <ligand>
        <name>RNA</name>
        <dbReference type="ChEBI" id="CHEBI:33697"/>
    </ligand>
</feature>
<feature type="site" description="Important for dimerization" evidence="1">
    <location>
        <position position="125"/>
    </location>
</feature>
<feature type="mutagenesis site" description="Complete loss of RNA-binding; when associated with A-67 and A-74." evidence="6">
    <original>R</original>
    <variation>D</variation>
    <location>
        <position position="64"/>
    </location>
</feature>
<feature type="mutagenesis site" description="Complete loss of RNA-binding; when associated with A-64 and A-74." evidence="6">
    <original>K</original>
    <variation>D</variation>
    <location>
        <position position="67"/>
    </location>
</feature>
<feature type="mutagenesis site" description="Complete loss of RNA-binding; when associated with A-64 and A-67." evidence="6">
    <original>K</original>
    <variation>D</variation>
    <location>
        <position position="74"/>
    </location>
</feature>
<feature type="helix" evidence="12">
    <location>
        <begin position="4"/>
        <end position="13"/>
    </location>
</feature>
<feature type="helix" evidence="12">
    <location>
        <begin position="18"/>
        <end position="28"/>
    </location>
</feature>
<feature type="helix" evidence="12">
    <location>
        <begin position="35"/>
        <end position="46"/>
    </location>
</feature>
<feature type="helix" evidence="12">
    <location>
        <begin position="47"/>
        <end position="49"/>
    </location>
</feature>
<feature type="helix" evidence="12">
    <location>
        <begin position="50"/>
        <end position="63"/>
    </location>
</feature>
<feature type="helix" evidence="12">
    <location>
        <begin position="68"/>
        <end position="71"/>
    </location>
</feature>
<feature type="helix" evidence="12">
    <location>
        <begin position="72"/>
        <end position="74"/>
    </location>
</feature>
<feature type="helix" evidence="12">
    <location>
        <begin position="77"/>
        <end position="90"/>
    </location>
</feature>
<feature type="strand" evidence="12">
    <location>
        <begin position="94"/>
        <end position="96"/>
    </location>
</feature>
<feature type="helix" evidence="12">
    <location>
        <begin position="104"/>
        <end position="110"/>
    </location>
</feature>
<feature type="helix" evidence="12">
    <location>
        <begin position="112"/>
        <end position="122"/>
    </location>
</feature>
<feature type="helix" evidence="12">
    <location>
        <begin position="123"/>
        <end position="125"/>
    </location>
</feature>
<feature type="strand" evidence="12">
    <location>
        <begin position="126"/>
        <end position="128"/>
    </location>
</feature>
<feature type="helix" evidence="12">
    <location>
        <begin position="130"/>
        <end position="136"/>
    </location>
</feature>
<feature type="helix" evidence="12">
    <location>
        <begin position="142"/>
        <end position="144"/>
    </location>
</feature>
<feature type="helix" evidence="12">
    <location>
        <begin position="147"/>
        <end position="152"/>
    </location>
</feature>
<feature type="helix" evidence="12">
    <location>
        <begin position="159"/>
        <end position="180"/>
    </location>
</feature>
<feature type="helix" evidence="11">
    <location>
        <begin position="182"/>
        <end position="184"/>
    </location>
</feature>
<feature type="helix" evidence="12">
    <location>
        <begin position="189"/>
        <end position="204"/>
    </location>
</feature>
<feature type="strand" evidence="12">
    <location>
        <begin position="207"/>
        <end position="209"/>
    </location>
</feature>
<feature type="helix" evidence="12">
    <location>
        <begin position="211"/>
        <end position="220"/>
    </location>
</feature>
<feature type="helix" evidence="12">
    <location>
        <begin position="232"/>
        <end position="243"/>
    </location>
</feature>
<comment type="function">
    <text evidence="1 5 7">Encapsidates the genomic RNA, protecting it from nucleases (By similarity). Displays high affinity for single-stranded nucleic acid (By similarity). The encapsidated genomic RNA is termed the nucleocapsid (NC) (By similarity). The ribonucleoprotein has a non-helical structure (By similarity). Serves as template for viral transcription and replication (PubMed:7769655). After replication, the nucleocapsid is recruited to the host Golgi apparatus by glycoprotein Gn for packaging into virus particles (PubMed:21445316).</text>
</comment>
<comment type="subunit">
    <text evidence="1 3 4 5 6">Homodimer (PubMed:16140773). Homohexamer; ring-shaped, necessary to form the nucleocapsid (PubMed:16140773, PubMed:21589902). Homopentamers; opened pentamers in solution (By similarity). Binds to viral genomic RNA (By similarity). Interacts with glycoprotein Gn; this interaction allows packaging of nucleocapsids into virions (PubMed:21445316).</text>
</comment>
<comment type="subcellular location">
    <subcellularLocation>
        <location>Virion</location>
    </subcellularLocation>
    <subcellularLocation>
        <location evidence="1">Host cytoplasm</location>
    </subcellularLocation>
    <subcellularLocation>
        <location evidence="1">Host nucleus</location>
    </subcellularLocation>
    <subcellularLocation>
        <location evidence="2">Host endoplasmic reticulum-Golgi intermediate compartment</location>
    </subcellularLocation>
    <subcellularLocation>
        <location evidence="2">Host Golgi apparatus</location>
    </subcellularLocation>
</comment>
<comment type="domain">
    <text evidence="3">The N-terminus is involved in homooligomerization.</text>
</comment>
<comment type="similarity">
    <text evidence="8">Belongs to the phlebovirus nucleocapsid protein family.</text>
</comment>
<name>NCAP_RVFVZ</name>
<evidence type="ECO:0000250" key="1">
    <source>
        <dbReference type="UniProtKB" id="D3K5I7"/>
    </source>
</evidence>
<evidence type="ECO:0000250" key="2">
    <source>
        <dbReference type="UniProtKB" id="I6WJ72"/>
    </source>
</evidence>
<evidence type="ECO:0000250" key="3">
    <source>
        <dbReference type="UniProtKB" id="P21701"/>
    </source>
</evidence>
<evidence type="ECO:0000269" key="4">
    <source>
    </source>
</evidence>
<evidence type="ECO:0000269" key="5">
    <source>
    </source>
</evidence>
<evidence type="ECO:0000269" key="6">
    <source>
    </source>
</evidence>
<evidence type="ECO:0000269" key="7">
    <source>
    </source>
</evidence>
<evidence type="ECO:0000305" key="8"/>
<evidence type="ECO:0007744" key="9">
    <source>
        <dbReference type="PDB" id="3OUO"/>
    </source>
</evidence>
<evidence type="ECO:0007744" key="10">
    <source>
        <dbReference type="PDB" id="3OV9"/>
    </source>
</evidence>
<evidence type="ECO:0007829" key="11">
    <source>
        <dbReference type="PDB" id="3OUO"/>
    </source>
</evidence>
<evidence type="ECO:0007829" key="12">
    <source>
        <dbReference type="PDB" id="3OV9"/>
    </source>
</evidence>
<protein>
    <recommendedName>
        <fullName>Nucleoprotein</fullName>
    </recommendedName>
    <alternativeName>
        <fullName>Nucleocapsid protein</fullName>
        <shortName>Protein N</shortName>
    </alternativeName>
</protein>
<sequence length="245" mass="27431">MDNYQELRVQFAAQAVDRNEIEQWVREFAYQGFDARRVIELLKQYGGADWEKDAKKMIVLALTRGNKPRRMMMKMSKEGKATVEALINKYKLKEGNPSRDELTLSRVAAALAGWTCQALVVLSEWLPVTGTTMDGLSPAYPRHMMHPSFAGMVDPSLPGDYLRAILDAHSLYLLQFSRVINPNLRGRTKEEVAATFTQPMNAAVNSNFISHEKRREFLKAFGLVDSNGKPSAAVMAAAQAYKTAA</sequence>
<proteinExistence type="evidence at protein level"/>
<gene>
    <name type="primary">N</name>
</gene>
<accession>P21700</accession>
<organismHost>
    <name type="scientific">Aedes</name>
    <dbReference type="NCBI Taxonomy" id="7158"/>
</organismHost>
<organismHost>
    <name type="scientific">Bos taurus</name>
    <name type="common">Bovine</name>
    <dbReference type="NCBI Taxonomy" id="9913"/>
</organismHost>
<organismHost>
    <name type="scientific">Bos taurus x Bison bison</name>
    <name type="common">beefalo</name>
    <dbReference type="NCBI Taxonomy" id="297284"/>
</organismHost>
<organismHost>
    <name type="scientific">Camelus bactrianus</name>
    <name type="common">Bactrian camel</name>
    <dbReference type="NCBI Taxonomy" id="9837"/>
</organismHost>
<organismHost>
    <name type="scientific">Capra hircus</name>
    <name type="common">Goat</name>
    <dbReference type="NCBI Taxonomy" id="9925"/>
</organismHost>
<organismHost>
    <name type="scientific">Homo sapiens</name>
    <name type="common">Human</name>
    <dbReference type="NCBI Taxonomy" id="9606"/>
</organismHost>
<organismHost>
    <name type="scientific">Ovis aries</name>
    <name type="common">Sheep</name>
    <dbReference type="NCBI Taxonomy" id="9940"/>
</organismHost>
<organismHost>
    <name type="scientific">Phlebotomus papatasi</name>
    <name type="common">Sandfly</name>
    <dbReference type="NCBI Taxonomy" id="29031"/>
</organismHost>
<dbReference type="EMBL" id="X53771">
    <property type="protein sequence ID" value="CAA37789.1"/>
    <property type="molecule type" value="Genomic_RNA"/>
</dbReference>
<dbReference type="PIR" id="D38552">
    <property type="entry name" value="VHVURV"/>
</dbReference>
<dbReference type="PDB" id="3OUO">
    <property type="method" value="X-ray"/>
    <property type="resolution" value="2.30 A"/>
    <property type="chains" value="A/B/C=1-245"/>
</dbReference>
<dbReference type="PDB" id="3OV9">
    <property type="method" value="X-ray"/>
    <property type="resolution" value="1.60 A"/>
    <property type="chains" value="A/B/C=1-245"/>
</dbReference>
<dbReference type="PDBsum" id="3OUO"/>
<dbReference type="PDBsum" id="3OV9"/>
<dbReference type="SMR" id="P21700"/>
<dbReference type="EvolutionaryTrace" id="P21700"/>
<dbReference type="Proteomes" id="UP000002477">
    <property type="component" value="Genome"/>
</dbReference>
<dbReference type="GO" id="GO:0019029">
    <property type="term" value="C:helical viral capsid"/>
    <property type="evidence" value="ECO:0007669"/>
    <property type="project" value="UniProtKB-KW"/>
</dbReference>
<dbReference type="GO" id="GO:0044172">
    <property type="term" value="C:host cell endoplasmic reticulum-Golgi intermediate compartment"/>
    <property type="evidence" value="ECO:0007669"/>
    <property type="project" value="UniProtKB-SubCell"/>
</dbReference>
<dbReference type="GO" id="GO:0044177">
    <property type="term" value="C:host cell Golgi apparatus"/>
    <property type="evidence" value="ECO:0007669"/>
    <property type="project" value="UniProtKB-SubCell"/>
</dbReference>
<dbReference type="GO" id="GO:0042025">
    <property type="term" value="C:host cell nucleus"/>
    <property type="evidence" value="ECO:0007669"/>
    <property type="project" value="UniProtKB-SubCell"/>
</dbReference>
<dbReference type="GO" id="GO:1990904">
    <property type="term" value="C:ribonucleoprotein complex"/>
    <property type="evidence" value="ECO:0007669"/>
    <property type="project" value="UniProtKB-KW"/>
</dbReference>
<dbReference type="GO" id="GO:0019013">
    <property type="term" value="C:viral nucleocapsid"/>
    <property type="evidence" value="ECO:0007669"/>
    <property type="project" value="UniProtKB-KW"/>
</dbReference>
<dbReference type="GO" id="GO:0003723">
    <property type="term" value="F:RNA binding"/>
    <property type="evidence" value="ECO:0007669"/>
    <property type="project" value="UniProtKB-KW"/>
</dbReference>
<dbReference type="InterPro" id="IPR009522">
    <property type="entry name" value="Capsid_Phlebovir/Tenuivir"/>
</dbReference>
<dbReference type="InterPro" id="IPR015971">
    <property type="entry name" value="Nucleocapsid_Phlebovirus"/>
</dbReference>
<dbReference type="Pfam" id="PF05733">
    <property type="entry name" value="Tenui_N"/>
    <property type="match status" value="1"/>
</dbReference>
<dbReference type="PIRSF" id="PIRSF003953">
    <property type="entry name" value="N_PhelboV"/>
    <property type="match status" value="1"/>
</dbReference>
<reference key="1">
    <citation type="journal article" date="1991" name="Virology">
        <title>Sequences and coding strategies of the S RNAs of Toscana and Rift Valley fever viruses compared to those of Punta Toro, Sicilian Sandfly fever, and Uukuniemi viruses.</title>
        <authorList>
            <person name="Giorgi C."/>
            <person name="Accardi L."/>
            <person name="Nicoletti L."/>
            <person name="Gro M.C."/>
            <person name="Takehara K."/>
            <person name="Hilditch C."/>
            <person name="Morikawa S."/>
            <person name="Bishop D.H.L."/>
        </authorList>
    </citation>
    <scope>NUCLEOTIDE SEQUENCE [GENOMIC RNA]</scope>
</reference>
<reference key="2">
    <citation type="journal article" date="1995" name="J. Virol.">
        <title>The L protein of Rift Valley fever virus can rescue viral ribonucleoproteins and transcribe synthetic genome-like RNA molecules.</title>
        <authorList>
            <person name="Lopez N."/>
            <person name="Muller R."/>
            <person name="Prehaud C."/>
            <person name="Bouloy M."/>
        </authorList>
    </citation>
    <scope>FUNCTION</scope>
    <source>
        <strain>MP12</strain>
    </source>
</reference>
<reference key="3">
    <citation type="journal article" date="2005" name="J. Virol.">
        <title>The N terminus of Rift Valley fever virus nucleoprotein is essential for dimerization.</title>
        <authorList>
            <person name="Le May N."/>
            <person name="Gauliard N."/>
            <person name="Billecocq A."/>
            <person name="Bouloy M."/>
        </authorList>
    </citation>
    <scope>SUBUNIT</scope>
    <scope>REGION</scope>
    <source>
        <strain>MP12</strain>
    </source>
</reference>
<reference key="4">
    <citation type="journal article" date="2011" name="PLoS ONE">
        <title>Efficient cellular release of Rift Valley fever virus requires genomic RNA.</title>
        <authorList>
            <person name="Piper M.E."/>
            <person name="Sorenson D.R."/>
            <person name="Gerrard S.R."/>
        </authorList>
    </citation>
    <scope>INTERACTION WITH GLYCOPROTEIN GN</scope>
    <scope>FUNCTION</scope>
</reference>
<reference evidence="9 10" key="5">
    <citation type="journal article" date="2011" name="PLoS Pathog.">
        <title>The hexamer structure of Rift Valley fever virus nucleoprotein suggests a mechanism for its assembly into ribonucleoprotein complexes.</title>
        <authorList>
            <person name="Ferron F."/>
            <person name="Li Z."/>
            <person name="Danek E.I."/>
            <person name="Luo D."/>
            <person name="Wong Y."/>
            <person name="Coutard B."/>
            <person name="Lantez V."/>
            <person name="Charrel R."/>
            <person name="Canard B."/>
            <person name="Walz T."/>
            <person name="Lescar J."/>
        </authorList>
    </citation>
    <scope>X-RAY CRYSTALLOGRAPHY (1.60 ANGSTROMS)</scope>
    <scope>SUBUNIT</scope>
    <scope>MUTAGENESIS OF ARG-64; LYS-67 AND LYS-74</scope>
    <source>
        <strain>Smithburn</strain>
    </source>
</reference>
<organism>
    <name type="scientific">Rift valley fever virus (strain ZH-548 M12)</name>
    <name type="common">RVFV</name>
    <dbReference type="NCBI Taxonomy" id="11589"/>
    <lineage>
        <taxon>Viruses</taxon>
        <taxon>Riboviria</taxon>
        <taxon>Orthornavirae</taxon>
        <taxon>Negarnaviricota</taxon>
        <taxon>Polyploviricotina</taxon>
        <taxon>Ellioviricetes</taxon>
        <taxon>Bunyavirales</taxon>
        <taxon>Phenuiviridae</taxon>
        <taxon>Phlebovirus</taxon>
        <taxon>Phlebovirus riftense</taxon>
    </lineage>
</organism>
<keyword id="KW-0002">3D-structure</keyword>
<keyword id="KW-0167">Capsid protein</keyword>
<keyword id="KW-1139">Helical capsid protein</keyword>
<keyword id="KW-1035">Host cytoplasm</keyword>
<keyword id="KW-1040">Host Golgi apparatus</keyword>
<keyword id="KW-1048">Host nucleus</keyword>
<keyword id="KW-1185">Reference proteome</keyword>
<keyword id="KW-0687">Ribonucleoprotein</keyword>
<keyword id="KW-0694">RNA-binding</keyword>
<keyword id="KW-0543">Viral nucleoprotein</keyword>
<keyword id="KW-0946">Virion</keyword>